<sequence length="505" mass="55238">MSRSYNDELQFLEKINKNCWRIRKGFVPNMQVEGVFYVNDALEKLMFEELRNACRGGGVGGFLPAMKQIGNVAALPGIVHRSIGLPDVHSGYGFAIGNMAAFDMNDPEAVVSPGGVGFDINCGVRLLRTNLDESDVQPVKEQLAQAMFDHIPVGVGSKGVIPMNAKDLEEALEMGVDWSLREGYAWAEDKEHCEEYGRMLQADPNKVSARAKKRGLPQLGTLGAGNHYAEIQVVDEIFNEYAAKKMGIDHKGQVCVMIHSGSRGLGHQVATDALVAMEKAMKRDKIIVNDRQLACARIASPEGQDYLKGMAAAGNYAWVNRSSMTFLTRQAFAKVFNTTPDDLDLHVIYDVSHNIAKVEQHVVDGKERTLLVHRKGSTRAFPPHHPLIAVDYQLTGQPVLIGGTMGTCSYVLTGTEQGMTETFGTTCHGAGRALSRAKSRRNLDFQDVLDKLADMGIAIRVASPKLVMEEAPESYKNVTDVVNTCHDAGISKKAIKLRPIAVIKG</sequence>
<keyword id="KW-0963">Cytoplasm</keyword>
<keyword id="KW-0342">GTP-binding</keyword>
<keyword id="KW-1017">Isopeptide bond</keyword>
<keyword id="KW-0436">Ligase</keyword>
<keyword id="KW-0464">Manganese</keyword>
<keyword id="KW-0479">Metal-binding</keyword>
<keyword id="KW-0547">Nucleotide-binding</keyword>
<keyword id="KW-0539">Nucleus</keyword>
<keyword id="KW-0597">Phosphoprotein</keyword>
<keyword id="KW-1185">Reference proteome</keyword>
<keyword id="KW-0819">tRNA processing</keyword>
<keyword id="KW-0832">Ubl conjugation</keyword>
<proteinExistence type="evidence at transcript level"/>
<comment type="function">
    <text evidence="3">Catalytic subunit of the tRNA-splicing ligase complex that acts by directly joining spliced tRNA halves to mature-sized tRNAs by incorporating the precursor-derived splice junction phosphate into the mature tRNA as a canonical 3',5'-phosphodiester. May act as an RNA ligase with broad substrate specificity, and may function toward other RNAs.</text>
</comment>
<comment type="catalytic activity">
    <reaction evidence="3">
        <text>a 3'-end 3'-phospho-ribonucleotide-RNA + a 5'-end dephospho-ribonucleoside-RNA + GTP = a ribonucleotidyl-ribonucleotide-RNA + GMP + diphosphate</text>
        <dbReference type="Rhea" id="RHEA:68076"/>
        <dbReference type="Rhea" id="RHEA-COMP:10463"/>
        <dbReference type="Rhea" id="RHEA-COMP:13936"/>
        <dbReference type="Rhea" id="RHEA-COMP:17355"/>
        <dbReference type="ChEBI" id="CHEBI:33019"/>
        <dbReference type="ChEBI" id="CHEBI:37565"/>
        <dbReference type="ChEBI" id="CHEBI:58115"/>
        <dbReference type="ChEBI" id="CHEBI:83062"/>
        <dbReference type="ChEBI" id="CHEBI:138284"/>
        <dbReference type="ChEBI" id="CHEBI:173118"/>
        <dbReference type="EC" id="6.5.1.8"/>
    </reaction>
</comment>
<comment type="catalytic activity">
    <reaction evidence="3">
        <text>a 3'-end 2',3'-cyclophospho-ribonucleotide-RNA + a 5'-end dephospho-ribonucleoside-RNA + GTP + H2O = a ribonucleotidyl-ribonucleotide-RNA + GMP + diphosphate + H(+)</text>
        <dbReference type="Rhea" id="RHEA:68080"/>
        <dbReference type="Rhea" id="RHEA-COMP:10464"/>
        <dbReference type="Rhea" id="RHEA-COMP:13936"/>
        <dbReference type="Rhea" id="RHEA-COMP:17355"/>
        <dbReference type="ChEBI" id="CHEBI:15377"/>
        <dbReference type="ChEBI" id="CHEBI:15378"/>
        <dbReference type="ChEBI" id="CHEBI:33019"/>
        <dbReference type="ChEBI" id="CHEBI:37565"/>
        <dbReference type="ChEBI" id="CHEBI:58115"/>
        <dbReference type="ChEBI" id="CHEBI:83064"/>
        <dbReference type="ChEBI" id="CHEBI:138284"/>
        <dbReference type="ChEBI" id="CHEBI:173118"/>
        <dbReference type="EC" id="6.5.1.8"/>
    </reaction>
</comment>
<comment type="cofactor">
    <cofactor evidence="3">
        <name>Mn(2+)</name>
        <dbReference type="ChEBI" id="CHEBI:29035"/>
    </cofactor>
    <text evidence="3">Binds 2 manganese ions per subunit.</text>
</comment>
<comment type="subunit">
    <text evidence="3">Catalytic component of the tRNA-splicing ligase complex.</text>
</comment>
<comment type="subcellular location">
    <subcellularLocation>
        <location evidence="1">Nucleus</location>
    </subcellularLocation>
    <subcellularLocation>
        <location evidence="3">Cytoplasm</location>
    </subcellularLocation>
    <text evidence="1">Enters into the nucleus in case of active transcription while it accumulates in cytosol when transcription level is low.</text>
</comment>
<comment type="miscellaneous">
    <text evidence="3">Ligation probably proceeds through 3 nucleotidyl transfer steps, with 2',3'-cyclic phosphate termini being hydrolyzed to 3'-P termini in a step that precedes 3'-P activation with GMP. In the first nucleotidyl transfer step, RTCB reacts with GTP to form a covalent RTCB-histidine-GMP intermediate with release of PPi; in the second step, the GMP moiety is transferred to the RNA 3'-P; in the third step, the 5'-OH from the opposite RNA strand attacks the activated 3'-P to form a 3',5'-phosphodiester bond and release GMP.</text>
</comment>
<comment type="similarity">
    <text evidence="3">Belongs to the RtcB family.</text>
</comment>
<protein>
    <recommendedName>
        <fullName evidence="3">RNA-splicing ligase RtcB homolog</fullName>
        <ecNumber evidence="3">6.5.1.8</ecNumber>
    </recommendedName>
    <alternativeName>
        <fullName evidence="3">3'-phosphate/5'-hydroxy nucleic acid ligase</fullName>
    </alternativeName>
</protein>
<name>RTCB_PIG</name>
<accession>Q19PY3</accession>
<accession>Q19PY4</accession>
<evidence type="ECO:0000250" key="1"/>
<evidence type="ECO:0000250" key="2">
    <source>
        <dbReference type="UniProtKB" id="Q9Y3I0"/>
    </source>
</evidence>
<evidence type="ECO:0000255" key="3">
    <source>
        <dbReference type="HAMAP-Rule" id="MF_03144"/>
    </source>
</evidence>
<evidence type="ECO:0000305" key="4"/>
<dbReference type="EC" id="6.5.1.8" evidence="3"/>
<dbReference type="EMBL" id="DQ508262">
    <property type="protein sequence ID" value="ABF81975.1"/>
    <property type="molecule type" value="mRNA"/>
</dbReference>
<dbReference type="EMBL" id="DQ508263">
    <property type="protein sequence ID" value="ABF81976.1"/>
    <property type="molecule type" value="mRNA"/>
</dbReference>
<dbReference type="RefSeq" id="NP_001116458.1">
    <property type="nucleotide sequence ID" value="NM_001122986.2"/>
</dbReference>
<dbReference type="SMR" id="Q19PY3"/>
<dbReference type="FunCoup" id="Q19PY3">
    <property type="interactions" value="1719"/>
</dbReference>
<dbReference type="STRING" id="9823.ENSSSCP00000000165"/>
<dbReference type="PaxDb" id="9823-ENSSSCP00000000165"/>
<dbReference type="PeptideAtlas" id="Q19PY3"/>
<dbReference type="GeneID" id="733658"/>
<dbReference type="KEGG" id="ssc:733658"/>
<dbReference type="CTD" id="51493"/>
<dbReference type="eggNOG" id="KOG3833">
    <property type="taxonomic scope" value="Eukaryota"/>
</dbReference>
<dbReference type="InParanoid" id="Q19PY3"/>
<dbReference type="OrthoDB" id="10249697at2759"/>
<dbReference type="Proteomes" id="UP000008227">
    <property type="component" value="Unplaced"/>
</dbReference>
<dbReference type="Proteomes" id="UP000314985">
    <property type="component" value="Unplaced"/>
</dbReference>
<dbReference type="Proteomes" id="UP000694570">
    <property type="component" value="Unplaced"/>
</dbReference>
<dbReference type="Proteomes" id="UP000694571">
    <property type="component" value="Unplaced"/>
</dbReference>
<dbReference type="Proteomes" id="UP000694720">
    <property type="component" value="Unplaced"/>
</dbReference>
<dbReference type="Proteomes" id="UP000694722">
    <property type="component" value="Unplaced"/>
</dbReference>
<dbReference type="Proteomes" id="UP000694723">
    <property type="component" value="Unplaced"/>
</dbReference>
<dbReference type="Proteomes" id="UP000694724">
    <property type="component" value="Unplaced"/>
</dbReference>
<dbReference type="Proteomes" id="UP000694725">
    <property type="component" value="Unplaced"/>
</dbReference>
<dbReference type="Proteomes" id="UP000694726">
    <property type="component" value="Unplaced"/>
</dbReference>
<dbReference type="Proteomes" id="UP000694727">
    <property type="component" value="Unplaced"/>
</dbReference>
<dbReference type="Proteomes" id="UP000694728">
    <property type="component" value="Unplaced"/>
</dbReference>
<dbReference type="GO" id="GO:0005737">
    <property type="term" value="C:cytoplasm"/>
    <property type="evidence" value="ECO:0000250"/>
    <property type="project" value="UniProtKB"/>
</dbReference>
<dbReference type="GO" id="GO:0005634">
    <property type="term" value="C:nucleus"/>
    <property type="evidence" value="ECO:0000250"/>
    <property type="project" value="UniProtKB"/>
</dbReference>
<dbReference type="GO" id="GO:0072669">
    <property type="term" value="C:tRNA-splicing ligase complex"/>
    <property type="evidence" value="ECO:0000250"/>
    <property type="project" value="UniProtKB"/>
</dbReference>
<dbReference type="GO" id="GO:0005525">
    <property type="term" value="F:GTP binding"/>
    <property type="evidence" value="ECO:0007669"/>
    <property type="project" value="UniProtKB-KW"/>
</dbReference>
<dbReference type="GO" id="GO:0046872">
    <property type="term" value="F:metal ion binding"/>
    <property type="evidence" value="ECO:0007669"/>
    <property type="project" value="UniProtKB-KW"/>
</dbReference>
<dbReference type="GO" id="GO:0170057">
    <property type="term" value="F:RNA ligase (GTP) activity"/>
    <property type="evidence" value="ECO:0000250"/>
    <property type="project" value="UniProtKB"/>
</dbReference>
<dbReference type="GO" id="GO:0006388">
    <property type="term" value="P:tRNA splicing, via endonucleolytic cleavage and ligation"/>
    <property type="evidence" value="ECO:0000250"/>
    <property type="project" value="UniProtKB"/>
</dbReference>
<dbReference type="FunFam" id="3.90.1860.10:FF:000001">
    <property type="entry name" value="tRNA-splicing ligase RtcB homolog"/>
    <property type="match status" value="1"/>
</dbReference>
<dbReference type="Gene3D" id="3.90.1860.10">
    <property type="entry name" value="tRNA-splicing ligase RtcB"/>
    <property type="match status" value="1"/>
</dbReference>
<dbReference type="HAMAP" id="MF_03144">
    <property type="entry name" value="RtcB_euk"/>
    <property type="match status" value="1"/>
</dbReference>
<dbReference type="InterPro" id="IPR001233">
    <property type="entry name" value="RtcB"/>
</dbReference>
<dbReference type="InterPro" id="IPR036025">
    <property type="entry name" value="RtcB-like_sf"/>
</dbReference>
<dbReference type="InterPro" id="IPR027513">
    <property type="entry name" value="RtcB_euk"/>
</dbReference>
<dbReference type="PANTHER" id="PTHR11118">
    <property type="entry name" value="RNA-SPLICING LIGASE RTCB HOMOLOG"/>
    <property type="match status" value="1"/>
</dbReference>
<dbReference type="PANTHER" id="PTHR11118:SF1">
    <property type="entry name" value="RNA-SPLICING LIGASE RTCB HOMOLOG"/>
    <property type="match status" value="1"/>
</dbReference>
<dbReference type="Pfam" id="PF01139">
    <property type="entry name" value="RtcB"/>
    <property type="match status" value="1"/>
</dbReference>
<dbReference type="SUPFAM" id="SSF103365">
    <property type="entry name" value="Hypothetical protein PH1602"/>
    <property type="match status" value="1"/>
</dbReference>
<dbReference type="PROSITE" id="PS01288">
    <property type="entry name" value="UPF0027"/>
    <property type="match status" value="1"/>
</dbReference>
<organism>
    <name type="scientific">Sus scrofa</name>
    <name type="common">Pig</name>
    <dbReference type="NCBI Taxonomy" id="9823"/>
    <lineage>
        <taxon>Eukaryota</taxon>
        <taxon>Metazoa</taxon>
        <taxon>Chordata</taxon>
        <taxon>Craniata</taxon>
        <taxon>Vertebrata</taxon>
        <taxon>Euteleostomi</taxon>
        <taxon>Mammalia</taxon>
        <taxon>Eutheria</taxon>
        <taxon>Laurasiatheria</taxon>
        <taxon>Artiodactyla</taxon>
        <taxon>Suina</taxon>
        <taxon>Suidae</taxon>
        <taxon>Sus</taxon>
    </lineage>
</organism>
<reference key="1">
    <citation type="submission" date="2006-04" db="EMBL/GenBank/DDBJ databases">
        <title>Isolation, cDNA sequence analysis and tissue expression profile of one novel swine gene differentially expressed in the longissimus dorsi muscle tissues from Large white x Meishan cross combination.</title>
        <authorList>
            <person name="Xie H."/>
            <person name="Xiong Y."/>
            <person name="Lei M."/>
        </authorList>
    </citation>
    <scope>NUCLEOTIDE SEQUENCE [MRNA]</scope>
    <source>
        <tissue>Longissimus dorsi muscle</tissue>
    </source>
</reference>
<gene>
    <name evidence="3" type="primary">RTCB</name>
</gene>
<feature type="chain" id="PRO_0000255244" description="RNA-splicing ligase RtcB homolog">
    <location>
        <begin position="1"/>
        <end position="505"/>
    </location>
</feature>
<feature type="active site" description="GMP-histidine intermediate" evidence="3">
    <location>
        <position position="428"/>
    </location>
</feature>
<feature type="binding site" evidence="3">
    <location>
        <position position="119"/>
    </location>
    <ligand>
        <name>Mn(2+)</name>
        <dbReference type="ChEBI" id="CHEBI:29035"/>
        <label>1</label>
    </ligand>
</feature>
<feature type="binding site" evidence="3">
    <location>
        <position position="122"/>
    </location>
    <ligand>
        <name>Mn(2+)</name>
        <dbReference type="ChEBI" id="CHEBI:29035"/>
        <label>1</label>
    </ligand>
</feature>
<feature type="binding site" evidence="3">
    <location>
        <position position="122"/>
    </location>
    <ligand>
        <name>Mn(2+)</name>
        <dbReference type="ChEBI" id="CHEBI:29035"/>
        <label>2</label>
    </ligand>
</feature>
<feature type="binding site" evidence="3">
    <location>
        <begin position="226"/>
        <end position="230"/>
    </location>
    <ligand>
        <name>GMP</name>
        <dbReference type="ChEBI" id="CHEBI:58115"/>
    </ligand>
</feature>
<feature type="binding site" evidence="3">
    <location>
        <position position="227"/>
    </location>
    <ligand>
        <name>Mn(2+)</name>
        <dbReference type="ChEBI" id="CHEBI:29035"/>
        <label>1</label>
    </ligand>
</feature>
<feature type="binding site" evidence="3">
    <location>
        <position position="259"/>
    </location>
    <ligand>
        <name>Mn(2+)</name>
        <dbReference type="ChEBI" id="CHEBI:29035"/>
        <label>2</label>
    </ligand>
</feature>
<feature type="binding site" evidence="3">
    <location>
        <begin position="353"/>
        <end position="354"/>
    </location>
    <ligand>
        <name>GMP</name>
        <dbReference type="ChEBI" id="CHEBI:58115"/>
    </ligand>
</feature>
<feature type="binding site" evidence="3">
    <location>
        <position position="353"/>
    </location>
    <ligand>
        <name>Mn(2+)</name>
        <dbReference type="ChEBI" id="CHEBI:29035"/>
        <label>2</label>
    </ligand>
</feature>
<feature type="binding site" evidence="3">
    <location>
        <begin position="402"/>
        <end position="405"/>
    </location>
    <ligand>
        <name>GMP</name>
        <dbReference type="ChEBI" id="CHEBI:58115"/>
    </ligand>
</feature>
<feature type="binding site" evidence="3">
    <location>
        <position position="409"/>
    </location>
    <ligand>
        <name>GMP</name>
        <dbReference type="ChEBI" id="CHEBI:58115"/>
    </ligand>
</feature>
<feature type="binding site" evidence="3">
    <location>
        <begin position="428"/>
        <end position="431"/>
    </location>
    <ligand>
        <name>GMP</name>
        <dbReference type="ChEBI" id="CHEBI:58115"/>
    </ligand>
</feature>
<feature type="binding site" evidence="3">
    <location>
        <position position="504"/>
    </location>
    <ligand>
        <name>GMP</name>
        <dbReference type="ChEBI" id="CHEBI:58115"/>
    </ligand>
</feature>
<feature type="modified residue" description="Phosphoserine" evidence="2">
    <location>
        <position position="300"/>
    </location>
</feature>
<feature type="cross-link" description="Glycyl lysine isopeptide (Lys-Gly) (interchain with G-Cter in SUMO2)" evidence="2">
    <location>
        <position position="496"/>
    </location>
</feature>
<feature type="sequence conflict" description="In Ref. 1; ABF81975." evidence="4" ref="1">
    <original>R</original>
    <variation>K</variation>
    <location>
        <position position="23"/>
    </location>
</feature>
<feature type="sequence conflict" description="In Ref. 1; ABF81975." evidence="4" ref="1">
    <original>E</original>
    <variation>G</variation>
    <location>
        <position position="182"/>
    </location>
</feature>
<feature type="sequence conflict" description="In Ref. 1; ABF81975." evidence="4" ref="1">
    <original>T</original>
    <variation>N</variation>
    <location>
        <position position="328"/>
    </location>
</feature>
<feature type="sequence conflict" description="In Ref. 1; ABF81975." evidence="4" ref="1">
    <original>A</original>
    <variation>V</variation>
    <location>
        <position position="356"/>
    </location>
</feature>
<feature type="sequence conflict" description="In Ref. 1; ABF81975." evidence="4" ref="1">
    <original>G</original>
    <variation>R</variation>
    <location>
        <position position="365"/>
    </location>
</feature>
<feature type="sequence conflict" description="In Ref. 1; ABF81975." evidence="4" ref="1">
    <original>T</original>
    <variation>A</variation>
    <location>
        <position position="407"/>
    </location>
</feature>
<feature type="sequence conflict" description="In Ref. 1; ABF81975." evidence="4" ref="1">
    <original>I</original>
    <variation>T</variation>
    <location>
        <position position="457"/>
    </location>
</feature>